<name>RFBA_VIBCH</name>
<reference key="1">
    <citation type="journal article" date="1992" name="Proc. Natl. Acad. Sci. U.S.A.">
        <title>Serotype conversion in Vibrio cholerae O1.</title>
        <authorList>
            <person name="Stroeher U.H."/>
            <person name="Karageorgos L.E."/>
            <person name="Morona R."/>
            <person name="Manning P.A."/>
        </authorList>
    </citation>
    <scope>NUCLEOTIDE SEQUENCE [GENOMIC DNA]</scope>
    <source>
        <strain>El Tor O17 / Serotype O1</strain>
    </source>
</reference>
<reference key="2">
    <citation type="journal article" date="2000" name="Nature">
        <title>DNA sequence of both chromosomes of the cholera pathogen Vibrio cholerae.</title>
        <authorList>
            <person name="Heidelberg J.F."/>
            <person name="Eisen J.A."/>
            <person name="Nelson W.C."/>
            <person name="Clayton R.A."/>
            <person name="Gwinn M.L."/>
            <person name="Dodson R.J."/>
            <person name="Haft D.H."/>
            <person name="Hickey E.K."/>
            <person name="Peterson J.D."/>
            <person name="Umayam L.A."/>
            <person name="Gill S.R."/>
            <person name="Nelson K.E."/>
            <person name="Read T.D."/>
            <person name="Tettelin H."/>
            <person name="Richardson D.L."/>
            <person name="Ermolaeva M.D."/>
            <person name="Vamathevan J.J."/>
            <person name="Bass S."/>
            <person name="Qin H."/>
            <person name="Dragoi I."/>
            <person name="Sellers P."/>
            <person name="McDonald L.A."/>
            <person name="Utterback T.R."/>
            <person name="Fleischmann R.D."/>
            <person name="Nierman W.C."/>
            <person name="White O."/>
            <person name="Salzberg S.L."/>
            <person name="Smith H.O."/>
            <person name="Colwell R.R."/>
            <person name="Mekalanos J.J."/>
            <person name="Venter J.C."/>
            <person name="Fraser C.M."/>
        </authorList>
    </citation>
    <scope>NUCLEOTIDE SEQUENCE [LARGE SCALE GENOMIC DNA]</scope>
    <source>
        <strain>ATCC 39315 / El Tor Inaba N16961</strain>
    </source>
</reference>
<dbReference type="EC" id="2.7.7.13"/>
<dbReference type="EMBL" id="X59554">
    <property type="protein sequence ID" value="CAA42134.1"/>
    <property type="status" value="ALT_FRAME"/>
    <property type="molecule type" value="Genomic_DNA"/>
</dbReference>
<dbReference type="EMBL" id="AE003852">
    <property type="protein sequence ID" value="AAF93417.1"/>
    <property type="molecule type" value="Genomic_DNA"/>
</dbReference>
<dbReference type="PIR" id="H82345">
    <property type="entry name" value="H82345"/>
</dbReference>
<dbReference type="PIR" id="S28468">
    <property type="entry name" value="S28468"/>
</dbReference>
<dbReference type="RefSeq" id="WP_001894734.1">
    <property type="nucleotide sequence ID" value="NZ_LT906614.1"/>
</dbReference>
<dbReference type="SMR" id="Q07024"/>
<dbReference type="STRING" id="243277.VC_0241"/>
<dbReference type="DNASU" id="2614704"/>
<dbReference type="EnsemblBacteria" id="AAF93417">
    <property type="protein sequence ID" value="AAF93417"/>
    <property type="gene ID" value="VC_0241"/>
</dbReference>
<dbReference type="KEGG" id="vch:VC_0241"/>
<dbReference type="eggNOG" id="COG0662">
    <property type="taxonomic scope" value="Bacteria"/>
</dbReference>
<dbReference type="eggNOG" id="COG0836">
    <property type="taxonomic scope" value="Bacteria"/>
</dbReference>
<dbReference type="HOGENOM" id="CLU_035527_1_0_6"/>
<dbReference type="UniPathway" id="UPA00126">
    <property type="reaction ID" value="UER00930"/>
</dbReference>
<dbReference type="UniPathway" id="UPA00281"/>
<dbReference type="Proteomes" id="UP000000584">
    <property type="component" value="Chromosome 1"/>
</dbReference>
<dbReference type="GO" id="GO:0005525">
    <property type="term" value="F:GTP binding"/>
    <property type="evidence" value="ECO:0007669"/>
    <property type="project" value="UniProtKB-KW"/>
</dbReference>
<dbReference type="GO" id="GO:0004475">
    <property type="term" value="F:mannose-1-phosphate guanylyltransferase (GTP) activity"/>
    <property type="evidence" value="ECO:0000318"/>
    <property type="project" value="GO_Central"/>
</dbReference>
<dbReference type="GO" id="GO:0009298">
    <property type="term" value="P:GDP-mannose biosynthetic process"/>
    <property type="evidence" value="ECO:0000318"/>
    <property type="project" value="GO_Central"/>
</dbReference>
<dbReference type="GO" id="GO:0009243">
    <property type="term" value="P:O antigen biosynthetic process"/>
    <property type="evidence" value="ECO:0007669"/>
    <property type="project" value="UniProtKB-UniPathway"/>
</dbReference>
<dbReference type="CDD" id="cd02213">
    <property type="entry name" value="cupin_PMI_typeII_C"/>
    <property type="match status" value="1"/>
</dbReference>
<dbReference type="CDD" id="cd02509">
    <property type="entry name" value="GDP-M1P_Guanylyltransferase"/>
    <property type="match status" value="1"/>
</dbReference>
<dbReference type="FunFam" id="3.90.550.10:FF:000046">
    <property type="entry name" value="Mannose-1-phosphate guanylyltransferase (GDP)"/>
    <property type="match status" value="1"/>
</dbReference>
<dbReference type="FunFam" id="2.60.120.10:FF:000032">
    <property type="entry name" value="Mannose-1-phosphate guanylyltransferase/mannose-6-phosphate isomerase"/>
    <property type="match status" value="1"/>
</dbReference>
<dbReference type="Gene3D" id="2.60.120.10">
    <property type="entry name" value="Jelly Rolls"/>
    <property type="match status" value="1"/>
</dbReference>
<dbReference type="Gene3D" id="3.90.550.10">
    <property type="entry name" value="Spore Coat Polysaccharide Biosynthesis Protein SpsA, Chain A"/>
    <property type="match status" value="1"/>
</dbReference>
<dbReference type="InterPro" id="IPR049577">
    <property type="entry name" value="GMPP_N"/>
</dbReference>
<dbReference type="InterPro" id="IPR006375">
    <property type="entry name" value="Man1P_GuaTrfase/Man6P_Isoase"/>
</dbReference>
<dbReference type="InterPro" id="IPR001538">
    <property type="entry name" value="Man6P_isomerase-2_C"/>
</dbReference>
<dbReference type="InterPro" id="IPR054566">
    <property type="entry name" value="ManC/GMP-like_b-helix"/>
</dbReference>
<dbReference type="InterPro" id="IPR051161">
    <property type="entry name" value="Mannose-6P_isomerase_type2"/>
</dbReference>
<dbReference type="InterPro" id="IPR005835">
    <property type="entry name" value="NTP_transferase_dom"/>
</dbReference>
<dbReference type="InterPro" id="IPR029044">
    <property type="entry name" value="Nucleotide-diphossugar_trans"/>
</dbReference>
<dbReference type="InterPro" id="IPR014710">
    <property type="entry name" value="RmlC-like_jellyroll"/>
</dbReference>
<dbReference type="InterPro" id="IPR011051">
    <property type="entry name" value="RmlC_Cupin_sf"/>
</dbReference>
<dbReference type="NCBIfam" id="TIGR01479">
    <property type="entry name" value="GMP_PMI"/>
    <property type="match status" value="1"/>
</dbReference>
<dbReference type="PANTHER" id="PTHR46390">
    <property type="entry name" value="MANNOSE-1-PHOSPHATE GUANYLYLTRANSFERASE"/>
    <property type="match status" value="1"/>
</dbReference>
<dbReference type="PANTHER" id="PTHR46390:SF1">
    <property type="entry name" value="MANNOSE-1-PHOSPHATE GUANYLYLTRANSFERASE"/>
    <property type="match status" value="1"/>
</dbReference>
<dbReference type="Pfam" id="PF22640">
    <property type="entry name" value="ManC_GMP_beta-helix"/>
    <property type="match status" value="1"/>
</dbReference>
<dbReference type="Pfam" id="PF01050">
    <property type="entry name" value="MannoseP_isomer"/>
    <property type="match status" value="1"/>
</dbReference>
<dbReference type="Pfam" id="PF00483">
    <property type="entry name" value="NTP_transferase"/>
    <property type="match status" value="1"/>
</dbReference>
<dbReference type="SUPFAM" id="SSF53448">
    <property type="entry name" value="Nucleotide-diphospho-sugar transferases"/>
    <property type="match status" value="1"/>
</dbReference>
<dbReference type="SUPFAM" id="SSF51182">
    <property type="entry name" value="RmlC-like cupins"/>
    <property type="match status" value="1"/>
</dbReference>
<keyword id="KW-0342">GTP-binding</keyword>
<keyword id="KW-0448">Lipopolysaccharide biosynthesis</keyword>
<keyword id="KW-0547">Nucleotide-binding</keyword>
<keyword id="KW-0548">Nucleotidyltransferase</keyword>
<keyword id="KW-1185">Reference proteome</keyword>
<keyword id="KW-0808">Transferase</keyword>
<protein>
    <recommendedName>
        <fullName>Putative mannose-1-phosphate guanylyltransferase</fullName>
        <ecNumber>2.7.7.13</ecNumber>
    </recommendedName>
    <alternativeName>
        <fullName>GDP-mannose pyrophosphorylase</fullName>
        <shortName>GMP</shortName>
        <shortName>GMPP</shortName>
    </alternativeName>
</protein>
<organism>
    <name type="scientific">Vibrio cholerae serotype O1 (strain ATCC 39315 / El Tor Inaba N16961)</name>
    <dbReference type="NCBI Taxonomy" id="243277"/>
    <lineage>
        <taxon>Bacteria</taxon>
        <taxon>Pseudomonadati</taxon>
        <taxon>Pseudomonadota</taxon>
        <taxon>Gammaproteobacteria</taxon>
        <taxon>Vibrionales</taxon>
        <taxon>Vibrionaceae</taxon>
        <taxon>Vibrio</taxon>
    </lineage>
</organism>
<proteinExistence type="inferred from homology"/>
<sequence length="465" mass="51916">MFIPVIMAGGSGSRLWPLSRSAFPKQFLSLDSSSQHTMLQATIERLQGLPIAEPIVISNEDHRFIVAEQIRRYGKKSRIILEPAGRNTAPAIALAAFTAIEQEDDPVLLVLAADHFVKNKSAFQAAISQAAQQAEAGKLATFGIVPTTPETGYGYIHRGEEVTQGTYEINSFVEKPQLNIAEQYLASGEYYWNSGCFMFKASVFLNELKQHSPEIYRQCELAMQGLSHDYDFIRVGVEEFLKCPDDSIDYAVMEHTKLGVVVSMDAGWSDVGSWSALWEVSDKDADGNVCQGDAILSGTSNCYIYAPNKLVAAVGLKDIVVVETKDAVLVADKNQVQEVKKIVEHLKAENRAEYREHRERYRPWGKSDAIDKGERYKVNRITVEPGKKQSLQMHYHRAEHWVVVSGTAKVTCEGNVKVITENQSLYIPIGTNHMIENPGKIPLELIEIQSGSYLNEDDVVRFEDK</sequence>
<feature type="chain" id="PRO_0000194262" description="Putative mannose-1-phosphate guanylyltransferase">
    <location>
        <begin position="1"/>
        <end position="465"/>
    </location>
</feature>
<accession>Q07024</accession>
<accession>Q9KVA6</accession>
<evidence type="ECO:0000305" key="1"/>
<comment type="catalytic activity">
    <reaction>
        <text>alpha-D-mannose 1-phosphate + GTP + H(+) = GDP-alpha-D-mannose + diphosphate</text>
        <dbReference type="Rhea" id="RHEA:15229"/>
        <dbReference type="ChEBI" id="CHEBI:15378"/>
        <dbReference type="ChEBI" id="CHEBI:33019"/>
        <dbReference type="ChEBI" id="CHEBI:37565"/>
        <dbReference type="ChEBI" id="CHEBI:57527"/>
        <dbReference type="ChEBI" id="CHEBI:58409"/>
        <dbReference type="EC" id="2.7.7.13"/>
    </reaction>
</comment>
<comment type="pathway">
    <text>Nucleotide-sugar biosynthesis; GDP-alpha-D-mannose biosynthesis; GDP-alpha-D-mannose from alpha-D-mannose 1-phosphate (GTP route): step 1/1.</text>
</comment>
<comment type="pathway">
    <text>Bacterial outer membrane biogenesis; LPS O-antigen biosynthesis.</text>
</comment>
<comment type="similarity">
    <text evidence="1">Belongs to the mannose-6-phosphate isomerase type 2 family.</text>
</comment>
<comment type="sequence caution" evidence="1">
    <conflict type="frameshift">
        <sequence resource="EMBL-CDS" id="CAA42134"/>
    </conflict>
</comment>
<gene>
    <name type="primary">rfbA</name>
    <name type="ordered locus">VC_0241</name>
</gene>